<proteinExistence type="evidence at transcript level"/>
<name>P53_XIPHE</name>
<protein>
    <recommendedName>
        <fullName>Cellular tumor antigen p53</fullName>
    </recommendedName>
    <alternativeName>
        <fullName>Tumor suppressor p53</fullName>
    </alternativeName>
</protein>
<evidence type="ECO:0000250" key="1"/>
<evidence type="ECO:0000250" key="2">
    <source>
        <dbReference type="UniProtKB" id="P04637"/>
    </source>
</evidence>
<evidence type="ECO:0000256" key="3">
    <source>
        <dbReference type="SAM" id="MobiDB-lite"/>
    </source>
</evidence>
<evidence type="ECO:0000305" key="4"/>
<organism>
    <name type="scientific">Xiphophorus hellerii</name>
    <name type="common">Green swordtail</name>
    <dbReference type="NCBI Taxonomy" id="8084"/>
    <lineage>
        <taxon>Eukaryota</taxon>
        <taxon>Metazoa</taxon>
        <taxon>Chordata</taxon>
        <taxon>Craniata</taxon>
        <taxon>Vertebrata</taxon>
        <taxon>Euteleostomi</taxon>
        <taxon>Actinopterygii</taxon>
        <taxon>Neopterygii</taxon>
        <taxon>Teleostei</taxon>
        <taxon>Neoteleostei</taxon>
        <taxon>Acanthomorphata</taxon>
        <taxon>Ovalentaria</taxon>
        <taxon>Atherinomorphae</taxon>
        <taxon>Cyprinodontiformes</taxon>
        <taxon>Poeciliidae</taxon>
        <taxon>Poeciliinae</taxon>
        <taxon>Xiphophorus</taxon>
    </lineage>
</organism>
<keyword id="KW-0010">Activator</keyword>
<keyword id="KW-0053">Apoptosis</keyword>
<keyword id="KW-0131">Cell cycle</keyword>
<keyword id="KW-0963">Cytoplasm</keyword>
<keyword id="KW-0238">DNA-binding</keyword>
<keyword id="KW-0479">Metal-binding</keyword>
<keyword id="KW-0539">Nucleus</keyword>
<keyword id="KW-0597">Phosphoprotein</keyword>
<keyword id="KW-0804">Transcription</keyword>
<keyword id="KW-0805">Transcription regulation</keyword>
<keyword id="KW-0043">Tumor suppressor</keyword>
<keyword id="KW-0862">Zinc</keyword>
<sequence>MEEADLTLPLSQDTFHDLWNNVFLSTENESLAPPEGLLSQNMDFWEDPETMQETKNVPTAPTVPAISNYAGEHGFNLEFNDSGTAKSVTSTYSVKLGKLFCQLAKTTPIGVLVKEEPPQGAVIRATSVYKKTEHVGEVVKRCPHHQSEDLSDNKSHLIRVEGSQLAQYFEDPNTRRHSVTVPYERPQLGSEMTTILLSFMCNSSCMGGMNRRPILTILTLETTEGEVLGRRCFEVRVCACPGRDRKTEEGNLEKSGTKQTKKRKSAPAPDTSTAKKSKSASSGEDEDKEIYTLSIRGRNRYLWFKSLNDGLELMDKTGPKIKQEIPAPSSGKRLLKGGSDSD</sequence>
<gene>
    <name type="primary">tp53</name>
    <name type="synonym">p53</name>
</gene>
<comment type="function">
    <text evidence="1">Multifunctional transcription factor that induces cell cycle arrest, DNA repair or apoptosis upon binding to its target DNA sequence. Acts as a tumor suppressor in many tumor types; induces growth arrest or apoptosis depending on the physiological circumstances and cell type. Negatively regulates cell division by controlling expression of a set of genes required for this process. One of the activated genes is an inhibitor of cyclin-dependent kinases. Apoptosis induction seems to be mediated either by stimulation of BAX and FAS antigen expression, or by repression of Bcl-2 expression (By similarity).</text>
</comment>
<comment type="cofactor">
    <cofactor evidence="1">
        <name>Zn(2+)</name>
        <dbReference type="ChEBI" id="CHEBI:29105"/>
    </cofactor>
    <text evidence="1">Binds 1 zinc ion per subunit.</text>
</comment>
<comment type="subunit">
    <text evidence="1">Binds DNA as a homotetramer.</text>
</comment>
<comment type="subcellular location">
    <subcellularLocation>
        <location evidence="1">Cytoplasm</location>
    </subcellularLocation>
    <subcellularLocation>
        <location evidence="1">Nucleus</location>
    </subcellularLocation>
</comment>
<comment type="domain">
    <text evidence="2">The N-terminal and C-terminal disordered regions undergo liquid-liquid phase separation (LLPS) following homotetramerization and activation. Post-translational modifications, such as phosphorylation or lactylation affect the ability to undergo LLPS.</text>
</comment>
<comment type="domain">
    <text evidence="2">The nuclear export signal acts as a transcriptional repression domain. The TADI and TADII motifs (residues 17 to 25 and 48 to 56) correspond both to 9aaTAD motifs which are transactivation domains present in a large number of yeast and animal transcription factors.</text>
</comment>
<comment type="similarity">
    <text evidence="4">Belongs to the p53 family.</text>
</comment>
<accession>O57538</accession>
<reference key="1">
    <citation type="journal article" date="1998" name="Gene">
        <title>Cloning and comparative sequence analysis of TP53 in xiphophorus fish hybrid melanoma models.</title>
        <authorList>
            <person name="Kazianis S."/>
            <person name="Gan L."/>
            <person name="Della Coletta L."/>
            <person name="Santi B."/>
            <person name="Morizot D.C."/>
            <person name="Nairn R.S."/>
        </authorList>
    </citation>
    <scope>NUCLEOTIDE SEQUENCE [MRNA]</scope>
    <source>
        <strain>Rio Sarabia</strain>
    </source>
</reference>
<feature type="chain" id="PRO_0000185725" description="Cellular tumor antigen p53">
    <location>
        <begin position="1"/>
        <end position="342"/>
    </location>
</feature>
<feature type="DNA-binding region" evidence="1">
    <location>
        <begin position="68"/>
        <end position="255"/>
    </location>
</feature>
<feature type="region of interest" description="Transcription activation (acidic)">
    <location>
        <begin position="1"/>
        <end position="35"/>
    </location>
</feature>
<feature type="region of interest" description="Interaction with DNA" evidence="1">
    <location>
        <begin position="236"/>
        <end position="243"/>
    </location>
</feature>
<feature type="region of interest" description="Disordered" evidence="3">
    <location>
        <begin position="244"/>
        <end position="287"/>
    </location>
</feature>
<feature type="region of interest" description="Oligomerization">
    <location>
        <begin position="288"/>
        <end position="317"/>
    </location>
</feature>
<feature type="region of interest" description="Disordered" evidence="3">
    <location>
        <begin position="318"/>
        <end position="342"/>
    </location>
</feature>
<feature type="region of interest" description="Basic (repression of DNA-binding)">
    <location>
        <begin position="319"/>
        <end position="336"/>
    </location>
</feature>
<feature type="short sequence motif" description="Bipartite nuclear localization signal" evidence="1">
    <location>
        <begin position="261"/>
        <end position="278"/>
    </location>
</feature>
<feature type="short sequence motif" description="Nuclear export signal" evidence="1">
    <location>
        <begin position="302"/>
        <end position="313"/>
    </location>
</feature>
<feature type="compositionally biased region" description="Basic and acidic residues" evidence="3">
    <location>
        <begin position="244"/>
        <end position="256"/>
    </location>
</feature>
<feature type="compositionally biased region" description="Low complexity" evidence="3">
    <location>
        <begin position="271"/>
        <end position="282"/>
    </location>
</feature>
<feature type="binding site" evidence="1">
    <location>
        <position position="142"/>
    </location>
    <ligand>
        <name>Zn(2+)</name>
        <dbReference type="ChEBI" id="CHEBI:29105"/>
    </ligand>
</feature>
<feature type="binding site" evidence="1">
    <location>
        <position position="145"/>
    </location>
    <ligand>
        <name>Zn(2+)</name>
        <dbReference type="ChEBI" id="CHEBI:29105"/>
    </ligand>
</feature>
<feature type="binding site" evidence="1">
    <location>
        <position position="201"/>
    </location>
    <ligand>
        <name>Zn(2+)</name>
        <dbReference type="ChEBI" id="CHEBI:29105"/>
    </ligand>
</feature>
<feature type="binding site" evidence="1">
    <location>
        <position position="205"/>
    </location>
    <ligand>
        <name>Zn(2+)</name>
        <dbReference type="ChEBI" id="CHEBI:29105"/>
    </ligand>
</feature>
<feature type="site" description="Interaction with DNA" evidence="1">
    <location>
        <position position="86"/>
    </location>
</feature>
<dbReference type="EMBL" id="AF043946">
    <property type="protein sequence ID" value="AAC31133.1"/>
    <property type="molecule type" value="mRNA"/>
</dbReference>
<dbReference type="RefSeq" id="XP_032438188.1">
    <property type="nucleotide sequence ID" value="XM_032582297.1"/>
</dbReference>
<dbReference type="RefSeq" id="XP_032438189.1">
    <property type="nucleotide sequence ID" value="XM_032582298.1"/>
</dbReference>
<dbReference type="RefSeq" id="XP_032438190.1">
    <property type="nucleotide sequence ID" value="XM_032582299.1"/>
</dbReference>
<dbReference type="SMR" id="O57538"/>
<dbReference type="GeneID" id="116732253"/>
<dbReference type="GO" id="GO:0005737">
    <property type="term" value="C:cytoplasm"/>
    <property type="evidence" value="ECO:0000250"/>
    <property type="project" value="UniProtKB"/>
</dbReference>
<dbReference type="GO" id="GO:0005739">
    <property type="term" value="C:mitochondrion"/>
    <property type="evidence" value="ECO:0000250"/>
    <property type="project" value="UniProtKB"/>
</dbReference>
<dbReference type="GO" id="GO:0005634">
    <property type="term" value="C:nucleus"/>
    <property type="evidence" value="ECO:0000250"/>
    <property type="project" value="UniProtKB"/>
</dbReference>
<dbReference type="GO" id="GO:0000981">
    <property type="term" value="F:DNA-binding transcription factor activity, RNA polymerase II-specific"/>
    <property type="evidence" value="ECO:0007669"/>
    <property type="project" value="TreeGrafter"/>
</dbReference>
<dbReference type="GO" id="GO:0046872">
    <property type="term" value="F:metal ion binding"/>
    <property type="evidence" value="ECO:0007669"/>
    <property type="project" value="UniProtKB-KW"/>
</dbReference>
<dbReference type="GO" id="GO:0140693">
    <property type="term" value="F:molecular condensate scaffold activity"/>
    <property type="evidence" value="ECO:0000250"/>
    <property type="project" value="UniProtKB"/>
</dbReference>
<dbReference type="GO" id="GO:1990841">
    <property type="term" value="F:promoter-specific chromatin binding"/>
    <property type="evidence" value="ECO:0000250"/>
    <property type="project" value="UniProtKB"/>
</dbReference>
<dbReference type="GO" id="GO:0000978">
    <property type="term" value="F:RNA polymerase II cis-regulatory region sequence-specific DNA binding"/>
    <property type="evidence" value="ECO:0007669"/>
    <property type="project" value="TreeGrafter"/>
</dbReference>
<dbReference type="GO" id="GO:0006915">
    <property type="term" value="P:apoptotic process"/>
    <property type="evidence" value="ECO:0007669"/>
    <property type="project" value="UniProtKB-KW"/>
</dbReference>
<dbReference type="GO" id="GO:0006974">
    <property type="term" value="P:DNA damage response"/>
    <property type="evidence" value="ECO:0000250"/>
    <property type="project" value="UniProtKB"/>
</dbReference>
<dbReference type="GO" id="GO:0045944">
    <property type="term" value="P:positive regulation of transcription by RNA polymerase II"/>
    <property type="evidence" value="ECO:0000250"/>
    <property type="project" value="UniProtKB"/>
</dbReference>
<dbReference type="GO" id="GO:0051262">
    <property type="term" value="P:protein tetramerization"/>
    <property type="evidence" value="ECO:0007669"/>
    <property type="project" value="InterPro"/>
</dbReference>
<dbReference type="CDD" id="cd08367">
    <property type="entry name" value="P53"/>
    <property type="match status" value="1"/>
</dbReference>
<dbReference type="Gene3D" id="2.60.40.720">
    <property type="match status" value="1"/>
</dbReference>
<dbReference type="Gene3D" id="4.10.170.10">
    <property type="entry name" value="p53-like tetramerisation domain"/>
    <property type="match status" value="1"/>
</dbReference>
<dbReference type="InterPro" id="IPR008967">
    <property type="entry name" value="p53-like_TF_DNA-bd_sf"/>
</dbReference>
<dbReference type="InterPro" id="IPR012346">
    <property type="entry name" value="p53/RUNT-type_TF_DNA-bd_sf"/>
</dbReference>
<dbReference type="InterPro" id="IPR011615">
    <property type="entry name" value="p53_DNA-bd"/>
</dbReference>
<dbReference type="InterPro" id="IPR036674">
    <property type="entry name" value="p53_tetramer_sf"/>
</dbReference>
<dbReference type="InterPro" id="IPR010991">
    <property type="entry name" value="p53_tetrameristn"/>
</dbReference>
<dbReference type="InterPro" id="IPR013872">
    <property type="entry name" value="p53_transactivation_domain"/>
</dbReference>
<dbReference type="InterPro" id="IPR002117">
    <property type="entry name" value="p53_tumour_suppressor"/>
</dbReference>
<dbReference type="PANTHER" id="PTHR11447">
    <property type="entry name" value="CELLULAR TUMOR ANTIGEN P53"/>
    <property type="match status" value="1"/>
</dbReference>
<dbReference type="PANTHER" id="PTHR11447:SF6">
    <property type="entry name" value="CELLULAR TUMOR ANTIGEN P53"/>
    <property type="match status" value="1"/>
</dbReference>
<dbReference type="Pfam" id="PF00870">
    <property type="entry name" value="P53"/>
    <property type="match status" value="1"/>
</dbReference>
<dbReference type="Pfam" id="PF08563">
    <property type="entry name" value="P53_TAD"/>
    <property type="match status" value="1"/>
</dbReference>
<dbReference type="Pfam" id="PF07710">
    <property type="entry name" value="P53_tetramer"/>
    <property type="match status" value="1"/>
</dbReference>
<dbReference type="PRINTS" id="PR00386">
    <property type="entry name" value="P53SUPPRESSR"/>
</dbReference>
<dbReference type="SUPFAM" id="SSF47719">
    <property type="entry name" value="p53 tetramerization domain"/>
    <property type="match status" value="1"/>
</dbReference>
<dbReference type="SUPFAM" id="SSF49417">
    <property type="entry name" value="p53-like transcription factors"/>
    <property type="match status" value="1"/>
</dbReference>
<dbReference type="PROSITE" id="PS00348">
    <property type="entry name" value="P53"/>
    <property type="match status" value="1"/>
</dbReference>